<comment type="catalytic activity">
    <reaction evidence="1">
        <text>tRNA(Gly) + glycine + ATP = glycyl-tRNA(Gly) + AMP + diphosphate</text>
        <dbReference type="Rhea" id="RHEA:16013"/>
        <dbReference type="Rhea" id="RHEA-COMP:9664"/>
        <dbReference type="Rhea" id="RHEA-COMP:9683"/>
        <dbReference type="ChEBI" id="CHEBI:30616"/>
        <dbReference type="ChEBI" id="CHEBI:33019"/>
        <dbReference type="ChEBI" id="CHEBI:57305"/>
        <dbReference type="ChEBI" id="CHEBI:78442"/>
        <dbReference type="ChEBI" id="CHEBI:78522"/>
        <dbReference type="ChEBI" id="CHEBI:456215"/>
        <dbReference type="EC" id="6.1.1.14"/>
    </reaction>
</comment>
<comment type="subunit">
    <text evidence="1">Tetramer of two alpha and two beta subunits.</text>
</comment>
<comment type="subcellular location">
    <subcellularLocation>
        <location evidence="1">Cytoplasm</location>
    </subcellularLocation>
</comment>
<comment type="similarity">
    <text evidence="1">Belongs to the class-II aminoacyl-tRNA synthetase family.</text>
</comment>
<protein>
    <recommendedName>
        <fullName evidence="1">Glycine--tRNA ligase beta subunit</fullName>
        <ecNumber evidence="1">6.1.1.14</ecNumber>
    </recommendedName>
    <alternativeName>
        <fullName evidence="1">Glycyl-tRNA synthetase beta subunit</fullName>
        <shortName evidence="1">GlyRS</shortName>
    </alternativeName>
</protein>
<organism>
    <name type="scientific">Vibrio vulnificus (strain CMCP6)</name>
    <dbReference type="NCBI Taxonomy" id="216895"/>
    <lineage>
        <taxon>Bacteria</taxon>
        <taxon>Pseudomonadati</taxon>
        <taxon>Pseudomonadota</taxon>
        <taxon>Gammaproteobacteria</taxon>
        <taxon>Vibrionales</taxon>
        <taxon>Vibrionaceae</taxon>
        <taxon>Vibrio</taxon>
    </lineage>
</organism>
<dbReference type="EC" id="6.1.1.14" evidence="1"/>
<dbReference type="EMBL" id="AE016795">
    <property type="protein sequence ID" value="AAO09480.1"/>
    <property type="molecule type" value="Genomic_DNA"/>
</dbReference>
<dbReference type="RefSeq" id="WP_011079027.1">
    <property type="nucleotide sequence ID" value="NC_004459.3"/>
</dbReference>
<dbReference type="SMR" id="Q8DDJ7"/>
<dbReference type="KEGG" id="vvu:VV1_0990"/>
<dbReference type="HOGENOM" id="CLU_007220_2_2_6"/>
<dbReference type="Proteomes" id="UP000002275">
    <property type="component" value="Chromosome 1"/>
</dbReference>
<dbReference type="GO" id="GO:0005829">
    <property type="term" value="C:cytosol"/>
    <property type="evidence" value="ECO:0007669"/>
    <property type="project" value="TreeGrafter"/>
</dbReference>
<dbReference type="GO" id="GO:0004814">
    <property type="term" value="F:arginine-tRNA ligase activity"/>
    <property type="evidence" value="ECO:0007669"/>
    <property type="project" value="InterPro"/>
</dbReference>
<dbReference type="GO" id="GO:0005524">
    <property type="term" value="F:ATP binding"/>
    <property type="evidence" value="ECO:0007669"/>
    <property type="project" value="UniProtKB-UniRule"/>
</dbReference>
<dbReference type="GO" id="GO:0004820">
    <property type="term" value="F:glycine-tRNA ligase activity"/>
    <property type="evidence" value="ECO:0007669"/>
    <property type="project" value="UniProtKB-UniRule"/>
</dbReference>
<dbReference type="GO" id="GO:0006420">
    <property type="term" value="P:arginyl-tRNA aminoacylation"/>
    <property type="evidence" value="ECO:0007669"/>
    <property type="project" value="InterPro"/>
</dbReference>
<dbReference type="GO" id="GO:0006426">
    <property type="term" value="P:glycyl-tRNA aminoacylation"/>
    <property type="evidence" value="ECO:0007669"/>
    <property type="project" value="UniProtKB-UniRule"/>
</dbReference>
<dbReference type="HAMAP" id="MF_00255">
    <property type="entry name" value="Gly_tRNA_synth_beta"/>
    <property type="match status" value="1"/>
</dbReference>
<dbReference type="InterPro" id="IPR008909">
    <property type="entry name" value="DALR_anticod-bd"/>
</dbReference>
<dbReference type="InterPro" id="IPR015944">
    <property type="entry name" value="Gly-tRNA-synth_bsu"/>
</dbReference>
<dbReference type="InterPro" id="IPR006194">
    <property type="entry name" value="Gly-tRNA-synth_heterodimer"/>
</dbReference>
<dbReference type="NCBIfam" id="TIGR00211">
    <property type="entry name" value="glyS"/>
    <property type="match status" value="1"/>
</dbReference>
<dbReference type="PANTHER" id="PTHR30075:SF2">
    <property type="entry name" value="GLYCINE--TRNA LIGASE, CHLOROPLASTIC_MITOCHONDRIAL 2"/>
    <property type="match status" value="1"/>
</dbReference>
<dbReference type="PANTHER" id="PTHR30075">
    <property type="entry name" value="GLYCYL-TRNA SYNTHETASE"/>
    <property type="match status" value="1"/>
</dbReference>
<dbReference type="Pfam" id="PF05746">
    <property type="entry name" value="DALR_1"/>
    <property type="match status" value="1"/>
</dbReference>
<dbReference type="Pfam" id="PF02092">
    <property type="entry name" value="tRNA_synt_2f"/>
    <property type="match status" value="1"/>
</dbReference>
<dbReference type="PRINTS" id="PR01045">
    <property type="entry name" value="TRNASYNTHGB"/>
</dbReference>
<dbReference type="SUPFAM" id="SSF109604">
    <property type="entry name" value="HD-domain/PDEase-like"/>
    <property type="match status" value="1"/>
</dbReference>
<dbReference type="PROSITE" id="PS50861">
    <property type="entry name" value="AA_TRNA_LIGASE_II_GLYAB"/>
    <property type="match status" value="1"/>
</dbReference>
<proteinExistence type="inferred from homology"/>
<reference key="1">
    <citation type="submission" date="2002-12" db="EMBL/GenBank/DDBJ databases">
        <title>Complete genome sequence of Vibrio vulnificus CMCP6.</title>
        <authorList>
            <person name="Rhee J.H."/>
            <person name="Kim S.Y."/>
            <person name="Chung S.S."/>
            <person name="Kim J.J."/>
            <person name="Moon Y.H."/>
            <person name="Jeong H."/>
            <person name="Choy H.E."/>
        </authorList>
    </citation>
    <scope>NUCLEOTIDE SEQUENCE [LARGE SCALE GENOMIC DNA]</scope>
    <source>
        <strain>CMCP6</strain>
    </source>
</reference>
<accession>Q8DDJ7</accession>
<evidence type="ECO:0000255" key="1">
    <source>
        <dbReference type="HAMAP-Rule" id="MF_00255"/>
    </source>
</evidence>
<name>SYGB_VIBVU</name>
<feature type="chain" id="PRO_0000072937" description="Glycine--tRNA ligase beta subunit">
    <location>
        <begin position="1"/>
        <end position="693"/>
    </location>
</feature>
<gene>
    <name evidence="1" type="primary">glyS</name>
    <name type="ordered locus">VV1_0990</name>
</gene>
<sequence>MAKEFLIELGTEELPPTQLRTLAEAFAANFEAELKGAELTHEGVKWYAAPRRLALKVTALAEHQADKIVEKRGPAVSAAFDADGNATKAAQGWARGCGITVDQAERMITDKGEWLLFKQEVKGQPTADIVVELAAKALAGLPIAKPMRWGNKTTQFIRPVKTLTMLMGSDLIQGEILGVASDRVIRGHRFMGEREFTIESAEQYPSILEERGKVMADYEARKAIILADAQKAAAAIGGIADLEDDLVEEVTSLVEWPVVLTAKFEEEFLKVPAEALVYTMKGDQKYFPVYTEDKQLLPNFIFVSNIESKEPRYVIEGNEKVVRPRLADAEFFFNTDRKSKLIDRLPMLENAIFQQQLGTIKDKTDRITELAGYIAEQIGADVEKSKRAGLLAKCDLMTSMVFEFTDTQGVMGMHYARHDGEAEEVAVALNEQYMPRFAGDDLPSNGVSSAVAMADKLDTIVGIFGIGQAPKGSDPFALRRASLGVLRIIVEYGYNLDLVDLVAKAKSLFAQQDGTSRLTNDNVEQEVIEFMLGRFRAWYQDEGFSVDIIQAVLARRPTKPADFDQRVKAVSHFRELEAAEALAAANKRVGNILAKFDGELAADIDLALLREDAEKVLAENVEVMTEALEPAFATGNYQEALSKLADLREPVDAFFDNVMVMADDEALKTNRLTLLNNLRNLFLQIADISLLQK</sequence>
<keyword id="KW-0030">Aminoacyl-tRNA synthetase</keyword>
<keyword id="KW-0067">ATP-binding</keyword>
<keyword id="KW-0963">Cytoplasm</keyword>
<keyword id="KW-0436">Ligase</keyword>
<keyword id="KW-0547">Nucleotide-binding</keyword>
<keyword id="KW-0648">Protein biosynthesis</keyword>